<evidence type="ECO:0000255" key="1">
    <source>
        <dbReference type="HAMAP-Rule" id="MF_00061"/>
    </source>
</evidence>
<name>ISPE_CHLCH</name>
<feature type="chain" id="PRO_0000235081" description="4-diphosphocytidyl-2-C-methyl-D-erythritol kinase">
    <location>
        <begin position="1"/>
        <end position="288"/>
    </location>
</feature>
<feature type="active site" evidence="1">
    <location>
        <position position="8"/>
    </location>
</feature>
<feature type="active site" evidence="1">
    <location>
        <position position="132"/>
    </location>
</feature>
<feature type="binding site" evidence="1">
    <location>
        <begin position="90"/>
        <end position="100"/>
    </location>
    <ligand>
        <name>ATP</name>
        <dbReference type="ChEBI" id="CHEBI:30616"/>
    </ligand>
</feature>
<comment type="function">
    <text evidence="1">Catalyzes the phosphorylation of the position 2 hydroxy group of 4-diphosphocytidyl-2C-methyl-D-erythritol.</text>
</comment>
<comment type="catalytic activity">
    <reaction evidence="1">
        <text>4-CDP-2-C-methyl-D-erythritol + ATP = 4-CDP-2-C-methyl-D-erythritol 2-phosphate + ADP + H(+)</text>
        <dbReference type="Rhea" id="RHEA:18437"/>
        <dbReference type="ChEBI" id="CHEBI:15378"/>
        <dbReference type="ChEBI" id="CHEBI:30616"/>
        <dbReference type="ChEBI" id="CHEBI:57823"/>
        <dbReference type="ChEBI" id="CHEBI:57919"/>
        <dbReference type="ChEBI" id="CHEBI:456216"/>
        <dbReference type="EC" id="2.7.1.148"/>
    </reaction>
</comment>
<comment type="pathway">
    <text evidence="1">Isoprenoid biosynthesis; isopentenyl diphosphate biosynthesis via DXP pathway; isopentenyl diphosphate from 1-deoxy-D-xylulose 5-phosphate: step 3/6.</text>
</comment>
<comment type="similarity">
    <text evidence="1">Belongs to the GHMP kinase family. IspE subfamily.</text>
</comment>
<organism>
    <name type="scientific">Chlorobium chlorochromatii (strain CaD3)</name>
    <dbReference type="NCBI Taxonomy" id="340177"/>
    <lineage>
        <taxon>Bacteria</taxon>
        <taxon>Pseudomonadati</taxon>
        <taxon>Chlorobiota</taxon>
        <taxon>Chlorobiia</taxon>
        <taxon>Chlorobiales</taxon>
        <taxon>Chlorobiaceae</taxon>
        <taxon>Chlorobium/Pelodictyon group</taxon>
        <taxon>Chlorobium</taxon>
    </lineage>
</organism>
<reference key="1">
    <citation type="submission" date="2005-08" db="EMBL/GenBank/DDBJ databases">
        <title>Complete sequence of Chlorobium chlorochromatii CaD3.</title>
        <authorList>
            <consortium name="US DOE Joint Genome Institute"/>
            <person name="Copeland A."/>
            <person name="Lucas S."/>
            <person name="Lapidus A."/>
            <person name="Barry K."/>
            <person name="Detter J.C."/>
            <person name="Glavina T."/>
            <person name="Hammon N."/>
            <person name="Israni S."/>
            <person name="Pitluck S."/>
            <person name="Bryant D."/>
            <person name="Schmutz J."/>
            <person name="Larimer F."/>
            <person name="Land M."/>
            <person name="Kyrpides N."/>
            <person name="Ivanova N."/>
            <person name="Richardson P."/>
        </authorList>
    </citation>
    <scope>NUCLEOTIDE SEQUENCE [LARGE SCALE GENOMIC DNA]</scope>
    <source>
        <strain>CaD3</strain>
    </source>
</reference>
<dbReference type="EC" id="2.7.1.148" evidence="1"/>
<dbReference type="EMBL" id="CP000108">
    <property type="protein sequence ID" value="ABB28593.1"/>
    <property type="molecule type" value="Genomic_DNA"/>
</dbReference>
<dbReference type="SMR" id="Q3AQY2"/>
<dbReference type="STRING" id="340177.Cag_1333"/>
<dbReference type="KEGG" id="cch:Cag_1333"/>
<dbReference type="eggNOG" id="COG1947">
    <property type="taxonomic scope" value="Bacteria"/>
</dbReference>
<dbReference type="HOGENOM" id="CLU_053057_3_0_10"/>
<dbReference type="OrthoDB" id="9809438at2"/>
<dbReference type="UniPathway" id="UPA00056">
    <property type="reaction ID" value="UER00094"/>
</dbReference>
<dbReference type="GO" id="GO:0050515">
    <property type="term" value="F:4-(cytidine 5'-diphospho)-2-C-methyl-D-erythritol kinase activity"/>
    <property type="evidence" value="ECO:0007669"/>
    <property type="project" value="UniProtKB-UniRule"/>
</dbReference>
<dbReference type="GO" id="GO:0005524">
    <property type="term" value="F:ATP binding"/>
    <property type="evidence" value="ECO:0007669"/>
    <property type="project" value="UniProtKB-UniRule"/>
</dbReference>
<dbReference type="GO" id="GO:0019288">
    <property type="term" value="P:isopentenyl diphosphate biosynthetic process, methylerythritol 4-phosphate pathway"/>
    <property type="evidence" value="ECO:0007669"/>
    <property type="project" value="UniProtKB-UniRule"/>
</dbReference>
<dbReference type="GO" id="GO:0016114">
    <property type="term" value="P:terpenoid biosynthetic process"/>
    <property type="evidence" value="ECO:0007669"/>
    <property type="project" value="InterPro"/>
</dbReference>
<dbReference type="Gene3D" id="3.30.230.10">
    <property type="match status" value="1"/>
</dbReference>
<dbReference type="Gene3D" id="3.30.70.890">
    <property type="entry name" value="GHMP kinase, C-terminal domain"/>
    <property type="match status" value="1"/>
</dbReference>
<dbReference type="HAMAP" id="MF_00061">
    <property type="entry name" value="IspE"/>
    <property type="match status" value="1"/>
</dbReference>
<dbReference type="InterPro" id="IPR013750">
    <property type="entry name" value="GHMP_kinase_C_dom"/>
</dbReference>
<dbReference type="InterPro" id="IPR036554">
    <property type="entry name" value="GHMP_kinase_C_sf"/>
</dbReference>
<dbReference type="InterPro" id="IPR006204">
    <property type="entry name" value="GHMP_kinase_N_dom"/>
</dbReference>
<dbReference type="InterPro" id="IPR004424">
    <property type="entry name" value="IspE"/>
</dbReference>
<dbReference type="InterPro" id="IPR020568">
    <property type="entry name" value="Ribosomal_Su5_D2-typ_SF"/>
</dbReference>
<dbReference type="InterPro" id="IPR014721">
    <property type="entry name" value="Ribsml_uS5_D2-typ_fold_subgr"/>
</dbReference>
<dbReference type="NCBIfam" id="TIGR00154">
    <property type="entry name" value="ispE"/>
    <property type="match status" value="1"/>
</dbReference>
<dbReference type="PANTHER" id="PTHR43527">
    <property type="entry name" value="4-DIPHOSPHOCYTIDYL-2-C-METHYL-D-ERYTHRITOL KINASE, CHLOROPLASTIC"/>
    <property type="match status" value="1"/>
</dbReference>
<dbReference type="PANTHER" id="PTHR43527:SF2">
    <property type="entry name" value="4-DIPHOSPHOCYTIDYL-2-C-METHYL-D-ERYTHRITOL KINASE, CHLOROPLASTIC"/>
    <property type="match status" value="1"/>
</dbReference>
<dbReference type="Pfam" id="PF08544">
    <property type="entry name" value="GHMP_kinases_C"/>
    <property type="match status" value="1"/>
</dbReference>
<dbReference type="Pfam" id="PF00288">
    <property type="entry name" value="GHMP_kinases_N"/>
    <property type="match status" value="1"/>
</dbReference>
<dbReference type="PIRSF" id="PIRSF010376">
    <property type="entry name" value="IspE"/>
    <property type="match status" value="1"/>
</dbReference>
<dbReference type="SUPFAM" id="SSF55060">
    <property type="entry name" value="GHMP Kinase, C-terminal domain"/>
    <property type="match status" value="1"/>
</dbReference>
<dbReference type="SUPFAM" id="SSF54211">
    <property type="entry name" value="Ribosomal protein S5 domain 2-like"/>
    <property type="match status" value="1"/>
</dbReference>
<accession>Q3AQY2</accession>
<protein>
    <recommendedName>
        <fullName evidence="1">4-diphosphocytidyl-2-C-methyl-D-erythritol kinase</fullName>
        <shortName evidence="1">CMK</shortName>
        <ecNumber evidence="1">2.7.1.148</ecNumber>
    </recommendedName>
    <alternativeName>
        <fullName evidence="1">4-(cytidine-5'-diphospho)-2-C-methyl-D-erythritol kinase</fullName>
    </alternativeName>
</protein>
<keyword id="KW-0067">ATP-binding</keyword>
<keyword id="KW-0414">Isoprene biosynthesis</keyword>
<keyword id="KW-0418">Kinase</keyword>
<keyword id="KW-0547">Nucleotide-binding</keyword>
<keyword id="KW-0808">Transferase</keyword>
<sequence length="288" mass="31303">MQAKAFAKINLGLFITGKRPDGYHNLETIFAPINWYDTITFEAADTISMSCTNLDLPVDENNLCIKAARALQQAAGVQHGIAMTLEKKVPFGAGLGGGSSDAATVLRVLNHLWQLNLPHATLHNIAVKLGADVPYFLFSKGIAYAGGIGDELEDLQTSLPFAILTVFPNEHIATVWAYKNFYRRFELQRPNLNTLVKNLCTTGNTSALPSFENDFEAAVFDHFPTVRDVKTMLMENGALYASLSGSGSALFGLFANEAEAYAAIESLPATYRTNITPARFVMDDGTGL</sequence>
<gene>
    <name evidence="1" type="primary">ispE</name>
    <name type="ordered locus">Cag_1333</name>
</gene>
<proteinExistence type="inferred from homology"/>